<accession>Q724J4</accession>
<organism>
    <name type="scientific">Listeria monocytogenes serotype 4b (strain F2365)</name>
    <dbReference type="NCBI Taxonomy" id="265669"/>
    <lineage>
        <taxon>Bacteria</taxon>
        <taxon>Bacillati</taxon>
        <taxon>Bacillota</taxon>
        <taxon>Bacilli</taxon>
        <taxon>Bacillales</taxon>
        <taxon>Listeriaceae</taxon>
        <taxon>Listeria</taxon>
    </lineage>
</organism>
<gene>
    <name type="primary">tilS/hprT</name>
    <name type="ordered locus">LMOf2365_0230</name>
</gene>
<protein>
    <recommendedName>
        <fullName>Bifunctional protein TilS/HprT</fullName>
    </recommendedName>
    <domain>
        <recommendedName>
            <fullName>tRNA(Ile)-lysidine synthase</fullName>
            <ecNumber>6.3.4.19</ecNumber>
        </recommendedName>
        <alternativeName>
            <fullName>tRNA(Ile)-2-lysyl-cytidine synthase</fullName>
        </alternativeName>
        <alternativeName>
            <fullName>tRNA(Ile)-lysidine synthetase</fullName>
        </alternativeName>
    </domain>
    <domain>
        <recommendedName>
            <fullName>Hypoxanthine-guanine phosphoribosyltransferase</fullName>
            <shortName>HGPRT</shortName>
            <shortName>HGPRTase</shortName>
            <ecNumber>2.4.2.8</ecNumber>
        </recommendedName>
    </domain>
</protein>
<proteinExistence type="inferred from homology"/>
<dbReference type="EC" id="6.3.4.19"/>
<dbReference type="EC" id="2.4.2.8"/>
<dbReference type="EMBL" id="AE017262">
    <property type="protein sequence ID" value="AAT03017.1"/>
    <property type="molecule type" value="Genomic_DNA"/>
</dbReference>
<dbReference type="RefSeq" id="WP_010958692.1">
    <property type="nucleotide sequence ID" value="NC_002973.6"/>
</dbReference>
<dbReference type="SMR" id="Q724J4"/>
<dbReference type="KEGG" id="lmf:LMOf2365_0230"/>
<dbReference type="HOGENOM" id="CLU_018869_0_1_9"/>
<dbReference type="GO" id="GO:0005737">
    <property type="term" value="C:cytoplasm"/>
    <property type="evidence" value="ECO:0007669"/>
    <property type="project" value="UniProtKB-SubCell"/>
</dbReference>
<dbReference type="GO" id="GO:0005524">
    <property type="term" value="F:ATP binding"/>
    <property type="evidence" value="ECO:0007669"/>
    <property type="project" value="UniProtKB-UniRule"/>
</dbReference>
<dbReference type="GO" id="GO:0052657">
    <property type="term" value="F:guanine phosphoribosyltransferase activity"/>
    <property type="evidence" value="ECO:0007669"/>
    <property type="project" value="RHEA"/>
</dbReference>
<dbReference type="GO" id="GO:0004422">
    <property type="term" value="F:hypoxanthine phosphoribosyltransferase activity"/>
    <property type="evidence" value="ECO:0007669"/>
    <property type="project" value="InterPro"/>
</dbReference>
<dbReference type="GO" id="GO:0046872">
    <property type="term" value="F:metal ion binding"/>
    <property type="evidence" value="ECO:0007669"/>
    <property type="project" value="UniProtKB-KW"/>
</dbReference>
<dbReference type="GO" id="GO:0032267">
    <property type="term" value="F:tRNA(Ile)-lysidine synthase activity"/>
    <property type="evidence" value="ECO:0007669"/>
    <property type="project" value="UniProtKB-EC"/>
</dbReference>
<dbReference type="GO" id="GO:0006166">
    <property type="term" value="P:purine ribonucleoside salvage"/>
    <property type="evidence" value="ECO:0007669"/>
    <property type="project" value="InterPro"/>
</dbReference>
<dbReference type="GO" id="GO:0006400">
    <property type="term" value="P:tRNA modification"/>
    <property type="evidence" value="ECO:0007669"/>
    <property type="project" value="UniProtKB-UniRule"/>
</dbReference>
<dbReference type="CDD" id="cd06223">
    <property type="entry name" value="PRTases_typeI"/>
    <property type="match status" value="1"/>
</dbReference>
<dbReference type="CDD" id="cd01992">
    <property type="entry name" value="TilS_N"/>
    <property type="match status" value="1"/>
</dbReference>
<dbReference type="FunFam" id="3.40.50.2020:FF:000006">
    <property type="entry name" value="Hypoxanthine phosphoribosyltransferase"/>
    <property type="match status" value="1"/>
</dbReference>
<dbReference type="Gene3D" id="3.30.465.60">
    <property type="match status" value="1"/>
</dbReference>
<dbReference type="Gene3D" id="3.40.50.2020">
    <property type="match status" value="1"/>
</dbReference>
<dbReference type="Gene3D" id="3.40.50.620">
    <property type="entry name" value="HUPs"/>
    <property type="match status" value="1"/>
</dbReference>
<dbReference type="HAMAP" id="MF_01161">
    <property type="entry name" value="tRNA_Ile_lys_synt"/>
    <property type="match status" value="1"/>
</dbReference>
<dbReference type="InterPro" id="IPR005904">
    <property type="entry name" value="Hxn_phspho_trans"/>
</dbReference>
<dbReference type="InterPro" id="IPR012796">
    <property type="entry name" value="Lysidine-tRNA-synth_C"/>
</dbReference>
<dbReference type="InterPro" id="IPR000836">
    <property type="entry name" value="PRibTrfase_dom"/>
</dbReference>
<dbReference type="InterPro" id="IPR029057">
    <property type="entry name" value="PRTase-like"/>
</dbReference>
<dbReference type="InterPro" id="IPR014729">
    <property type="entry name" value="Rossmann-like_a/b/a_fold"/>
</dbReference>
<dbReference type="InterPro" id="IPR011063">
    <property type="entry name" value="TilS/TtcA_N"/>
</dbReference>
<dbReference type="InterPro" id="IPR012094">
    <property type="entry name" value="tRNA_Ile_lys_synt"/>
</dbReference>
<dbReference type="InterPro" id="IPR012795">
    <property type="entry name" value="tRNA_Ile_lys_synt_N"/>
</dbReference>
<dbReference type="NCBIfam" id="TIGR01203">
    <property type="entry name" value="HGPRTase"/>
    <property type="match status" value="1"/>
</dbReference>
<dbReference type="NCBIfam" id="TIGR02433">
    <property type="entry name" value="lysidine_TilS_C"/>
    <property type="match status" value="1"/>
</dbReference>
<dbReference type="NCBIfam" id="TIGR02432">
    <property type="entry name" value="lysidine_TilS_N"/>
    <property type="match status" value="1"/>
</dbReference>
<dbReference type="PANTHER" id="PTHR43033">
    <property type="entry name" value="TRNA(ILE)-LYSIDINE SYNTHASE-RELATED"/>
    <property type="match status" value="1"/>
</dbReference>
<dbReference type="PANTHER" id="PTHR43033:SF1">
    <property type="entry name" value="TRNA(ILE)-LYSIDINE SYNTHASE-RELATED"/>
    <property type="match status" value="1"/>
</dbReference>
<dbReference type="Pfam" id="PF01171">
    <property type="entry name" value="ATP_bind_3"/>
    <property type="match status" value="1"/>
</dbReference>
<dbReference type="Pfam" id="PF00156">
    <property type="entry name" value="Pribosyltran"/>
    <property type="match status" value="1"/>
</dbReference>
<dbReference type="Pfam" id="PF11734">
    <property type="entry name" value="TilS_C"/>
    <property type="match status" value="1"/>
</dbReference>
<dbReference type="SMART" id="SM00977">
    <property type="entry name" value="TilS_C"/>
    <property type="match status" value="1"/>
</dbReference>
<dbReference type="SUPFAM" id="SSF52402">
    <property type="entry name" value="Adenine nucleotide alpha hydrolases-like"/>
    <property type="match status" value="1"/>
</dbReference>
<dbReference type="SUPFAM" id="SSF82829">
    <property type="entry name" value="MesJ substrate recognition domain-like"/>
    <property type="match status" value="1"/>
</dbReference>
<dbReference type="SUPFAM" id="SSF56037">
    <property type="entry name" value="PheT/TilS domain"/>
    <property type="match status" value="1"/>
</dbReference>
<dbReference type="SUPFAM" id="SSF53271">
    <property type="entry name" value="PRTase-like"/>
    <property type="match status" value="1"/>
</dbReference>
<dbReference type="PROSITE" id="PS00103">
    <property type="entry name" value="PUR_PYR_PR_TRANSFER"/>
    <property type="match status" value="1"/>
</dbReference>
<comment type="function">
    <text evidence="1">Ligates lysine onto the cytidine present at position 34 of the AUA codon-specific tRNA(Ile) that contains the anticodon CAU, in an ATP-dependent manner. Cytidine is converted to lysidine, thus changing the amino acid specificity of the tRNA from methionine to isoleucine (By similarity).</text>
</comment>
<comment type="catalytic activity">
    <reaction>
        <text>IMP + diphosphate = hypoxanthine + 5-phospho-alpha-D-ribose 1-diphosphate</text>
        <dbReference type="Rhea" id="RHEA:17973"/>
        <dbReference type="ChEBI" id="CHEBI:17368"/>
        <dbReference type="ChEBI" id="CHEBI:33019"/>
        <dbReference type="ChEBI" id="CHEBI:58017"/>
        <dbReference type="ChEBI" id="CHEBI:58053"/>
        <dbReference type="EC" id="2.4.2.8"/>
    </reaction>
</comment>
<comment type="catalytic activity">
    <reaction>
        <text>GMP + diphosphate = guanine + 5-phospho-alpha-D-ribose 1-diphosphate</text>
        <dbReference type="Rhea" id="RHEA:25424"/>
        <dbReference type="ChEBI" id="CHEBI:16235"/>
        <dbReference type="ChEBI" id="CHEBI:33019"/>
        <dbReference type="ChEBI" id="CHEBI:58017"/>
        <dbReference type="ChEBI" id="CHEBI:58115"/>
        <dbReference type="EC" id="2.4.2.8"/>
    </reaction>
</comment>
<comment type="catalytic activity">
    <reaction>
        <text>cytidine(34) in tRNA(Ile2) + L-lysine + ATP = lysidine(34) in tRNA(Ile2) + AMP + diphosphate + H(+)</text>
        <dbReference type="Rhea" id="RHEA:43744"/>
        <dbReference type="Rhea" id="RHEA-COMP:10625"/>
        <dbReference type="Rhea" id="RHEA-COMP:10670"/>
        <dbReference type="ChEBI" id="CHEBI:15378"/>
        <dbReference type="ChEBI" id="CHEBI:30616"/>
        <dbReference type="ChEBI" id="CHEBI:32551"/>
        <dbReference type="ChEBI" id="CHEBI:33019"/>
        <dbReference type="ChEBI" id="CHEBI:82748"/>
        <dbReference type="ChEBI" id="CHEBI:83665"/>
        <dbReference type="ChEBI" id="CHEBI:456215"/>
        <dbReference type="EC" id="6.3.4.19"/>
    </reaction>
</comment>
<comment type="cofactor">
    <cofactor evidence="1">
        <name>Mg(2+)</name>
        <dbReference type="ChEBI" id="CHEBI:18420"/>
    </cofactor>
    <text evidence="1">Binds 2 magnesium ions per subunit. One of the ions does not make direct protein contacts.</text>
</comment>
<comment type="subcellular location">
    <subcellularLocation>
        <location evidence="1">Cytoplasm</location>
    </subcellularLocation>
</comment>
<comment type="domain">
    <text>The N-terminal region contains the highly conserved SGGXDS motif, predicted to be a P-loop motif involved in ATP binding.</text>
</comment>
<comment type="similarity">
    <text evidence="3">In the N-terminal section; belongs to the tRNA(Ile)-lysidine synthase family.</text>
</comment>
<comment type="similarity">
    <text evidence="3">In the C-terminal section; belongs to the purine/pyrimidine phosphoribosyltransferase family.</text>
</comment>
<keyword id="KW-0067">ATP-binding</keyword>
<keyword id="KW-0963">Cytoplasm</keyword>
<keyword id="KW-0328">Glycosyltransferase</keyword>
<keyword id="KW-0436">Ligase</keyword>
<keyword id="KW-0460">Magnesium</keyword>
<keyword id="KW-0479">Metal-binding</keyword>
<keyword id="KW-0547">Nucleotide-binding</keyword>
<keyword id="KW-0808">Transferase</keyword>
<keyword id="KW-0819">tRNA processing</keyword>
<reference key="1">
    <citation type="journal article" date="2004" name="Nucleic Acids Res.">
        <title>Whole genome comparisons of serotype 4b and 1/2a strains of the food-borne pathogen Listeria monocytogenes reveal new insights into the core genome components of this species.</title>
        <authorList>
            <person name="Nelson K.E."/>
            <person name="Fouts D.E."/>
            <person name="Mongodin E.F."/>
            <person name="Ravel J."/>
            <person name="DeBoy R.T."/>
            <person name="Kolonay J.F."/>
            <person name="Rasko D.A."/>
            <person name="Angiuoli S.V."/>
            <person name="Gill S.R."/>
            <person name="Paulsen I.T."/>
            <person name="Peterson J.D."/>
            <person name="White O."/>
            <person name="Nelson W.C."/>
            <person name="Nierman W.C."/>
            <person name="Beanan M.J."/>
            <person name="Brinkac L.M."/>
            <person name="Daugherty S.C."/>
            <person name="Dodson R.J."/>
            <person name="Durkin A.S."/>
            <person name="Madupu R."/>
            <person name="Haft D.H."/>
            <person name="Selengut J."/>
            <person name="Van Aken S.E."/>
            <person name="Khouri H.M."/>
            <person name="Fedorova N."/>
            <person name="Forberger H.A."/>
            <person name="Tran B."/>
            <person name="Kathariou S."/>
            <person name="Wonderling L.D."/>
            <person name="Uhlich G.A."/>
            <person name="Bayles D.O."/>
            <person name="Luchansky J.B."/>
            <person name="Fraser C.M."/>
        </authorList>
    </citation>
    <scope>NUCLEOTIDE SEQUENCE [LARGE SCALE GENOMIC DNA]</scope>
    <source>
        <strain>F2365</strain>
    </source>
</reference>
<evidence type="ECO:0000250" key="1"/>
<evidence type="ECO:0000255" key="2"/>
<evidence type="ECO:0000305" key="3"/>
<name>TILS_LISMF</name>
<feature type="chain" id="PRO_0000181717" description="Bifunctional protein TilS/HprT">
    <location>
        <begin position="1"/>
        <end position="648"/>
    </location>
</feature>
<feature type="binding site" evidence="2">
    <location>
        <begin position="29"/>
        <end position="34"/>
    </location>
    <ligand>
        <name>ATP</name>
        <dbReference type="ChEBI" id="CHEBI:30616"/>
    </ligand>
</feature>
<feature type="binding site" evidence="1">
    <location>
        <position position="627"/>
    </location>
    <ligand>
        <name>Mg(2+)</name>
        <dbReference type="ChEBI" id="CHEBI:18420"/>
        <label>1</label>
    </ligand>
</feature>
<sequence>MDDTDKRVHKYIEKHDLIRSDDKLLVAVSGGPDSLALLHFLWNSNLVPKEAISVAHLNHHLRENAANEQNVVETFCESQGIPFYIEEVDVKSRAESLQKGIEETARIVRYDFFEKVMAEKKINKLALAHHADDQIETILMRLVRGSASIGWSGIQPKRELKGGQAIRPFLPITKAEIIDYAQKHELAYEIDESNTSQEYTRNRYRAQLLPFLKQENPAVYSHFERFSEETSEDFQFLEALASDLLKKNLIKNGKRTTLLLTNFKNEANPLQRRAIHLLLRYLYNEDASFITVNHIYQIIQMIQSDNPSSSIDLPNKLVANRAYDKLHFQFGEREAPSEFYHQLELNDRIELDNKASIRLKLKSSVVQTNGLNGMLLDAEEITLPLIVRNRVNGDRMTMKGQAGSKKLKDIFIDAKIPRQERDKLPVITDYTGKILWVPGVKKSAYDREFSRSKKQYIIRYTRNIGGNESMHNDIQKVLISEDELQEKIRELGRELTTEYEGRNPLVVGVLKGATPFMTDLLKRVDTYLEMDFMDVSSYGNGTVSSGEVKIIKDLNASVEGRDVLVIEDIIDSGRTLSYLVDLIKYRKAKSVKLVTLLDKPAGRNVEIEADYVGFVVPNEFVVGYGLDYAERYRNLPYIGILKPEIYSE</sequence>